<keyword id="KW-1185">Reference proteome</keyword>
<proteinExistence type="inferred from homology"/>
<feature type="chain" id="PRO_0000248026" description="UPF0297 protein DSY2420">
    <location>
        <begin position="1"/>
        <end position="83"/>
    </location>
</feature>
<protein>
    <recommendedName>
        <fullName evidence="1">UPF0297 protein DSY2420</fullName>
    </recommendedName>
</protein>
<dbReference type="EMBL" id="AP008230">
    <property type="protein sequence ID" value="BAE84209.1"/>
    <property type="molecule type" value="Genomic_DNA"/>
</dbReference>
<dbReference type="RefSeq" id="WP_011460321.1">
    <property type="nucleotide sequence ID" value="NC_007907.1"/>
</dbReference>
<dbReference type="SMR" id="Q24UT3"/>
<dbReference type="STRING" id="138119.DSY2420"/>
<dbReference type="KEGG" id="dsy:DSY2420"/>
<dbReference type="eggNOG" id="COG4472">
    <property type="taxonomic scope" value="Bacteria"/>
</dbReference>
<dbReference type="HOGENOM" id="CLU_162466_0_0_9"/>
<dbReference type="Proteomes" id="UP000001946">
    <property type="component" value="Chromosome"/>
</dbReference>
<dbReference type="HAMAP" id="MF_01507">
    <property type="entry name" value="UPF0297"/>
    <property type="match status" value="1"/>
</dbReference>
<dbReference type="InterPro" id="IPR009309">
    <property type="entry name" value="IreB"/>
</dbReference>
<dbReference type="NCBIfam" id="NF003997">
    <property type="entry name" value="PRK05473.1"/>
    <property type="match status" value="1"/>
</dbReference>
<dbReference type="PANTHER" id="PTHR40067">
    <property type="entry name" value="UPF0297 PROTEIN YRZL"/>
    <property type="match status" value="1"/>
</dbReference>
<dbReference type="PANTHER" id="PTHR40067:SF1">
    <property type="entry name" value="UPF0297 PROTEIN YRZL"/>
    <property type="match status" value="1"/>
</dbReference>
<dbReference type="Pfam" id="PF06135">
    <property type="entry name" value="IreB"/>
    <property type="match status" value="1"/>
</dbReference>
<dbReference type="PIRSF" id="PIRSF037258">
    <property type="entry name" value="DUF965_bac"/>
    <property type="match status" value="1"/>
</dbReference>
<organism>
    <name type="scientific">Desulfitobacterium hafniense (strain Y51)</name>
    <dbReference type="NCBI Taxonomy" id="138119"/>
    <lineage>
        <taxon>Bacteria</taxon>
        <taxon>Bacillati</taxon>
        <taxon>Bacillota</taxon>
        <taxon>Clostridia</taxon>
        <taxon>Eubacteriales</taxon>
        <taxon>Desulfitobacteriaceae</taxon>
        <taxon>Desulfitobacterium</taxon>
    </lineage>
</organism>
<comment type="similarity">
    <text evidence="1">Belongs to the UPF0297 family.</text>
</comment>
<gene>
    <name type="ordered locus">DSY2420</name>
</gene>
<evidence type="ECO:0000255" key="1">
    <source>
        <dbReference type="HAMAP-Rule" id="MF_01507"/>
    </source>
</evidence>
<sequence>MDRLEHTMMFKSQGGDVSPQEILQQVYVALEEKGYDPINQLVGYLMSGDPVYITSHNQARSLIRKLERYELLEELVRSYLQEK</sequence>
<name>Y2420_DESHY</name>
<reference key="1">
    <citation type="journal article" date="2006" name="J. Bacteriol.">
        <title>Complete genome sequence of the dehalorespiring bacterium Desulfitobacterium hafniense Y51 and comparison with Dehalococcoides ethenogenes 195.</title>
        <authorList>
            <person name="Nonaka H."/>
            <person name="Keresztes G."/>
            <person name="Shinoda Y."/>
            <person name="Ikenaga Y."/>
            <person name="Abe M."/>
            <person name="Naito K."/>
            <person name="Inatomi K."/>
            <person name="Furukawa K."/>
            <person name="Inui M."/>
            <person name="Yukawa H."/>
        </authorList>
    </citation>
    <scope>NUCLEOTIDE SEQUENCE [LARGE SCALE GENOMIC DNA]</scope>
    <source>
        <strain>Y51</strain>
    </source>
</reference>
<accession>Q24UT3</accession>